<protein>
    <recommendedName>
        <fullName evidence="1">NAD(P)H-quinone oxidoreductase subunit 3, chloroplastic</fullName>
        <ecNumber evidence="1">7.1.1.-</ecNumber>
    </recommendedName>
    <alternativeName>
        <fullName evidence="1">NAD(P)H dehydrogenase subunit 3</fullName>
    </alternativeName>
    <alternativeName>
        <fullName evidence="1">NADH-plastoquinone oxidoreductase subunit 3</fullName>
    </alternativeName>
</protein>
<geneLocation type="chloroplast"/>
<reference key="1">
    <citation type="journal article" date="2008" name="Mol. Phylogenet. Evol.">
        <title>Complete plastid genome sequence of the chickpea (Cicer arietinum) and the phylogenetic distribution of rps12 and clpP intron losses among legumes (Leguminosae).</title>
        <authorList>
            <person name="Jansen R.K."/>
            <person name="Wojciechowski M.F."/>
            <person name="Sanniyasi E."/>
            <person name="Lee S.-B."/>
            <person name="Daniell H."/>
        </authorList>
    </citation>
    <scope>NUCLEOTIDE SEQUENCE [LARGE SCALE GENOMIC DNA]</scope>
</reference>
<accession>B5LML1</accession>
<sequence length="120" mass="13894">MFLLYEYDIFWTFLIISILIPILAFLISGILAPIRKGPEKLSSYESGIEPMGDAWLQFQIRYYMFALVFVVFDVETVFLYPWAMSFDVLGVSVFIEALIFVLILIVGSVYAWRKGALEWS</sequence>
<evidence type="ECO:0000255" key="1">
    <source>
        <dbReference type="HAMAP-Rule" id="MF_01394"/>
    </source>
</evidence>
<name>NU3C_CICAR</name>
<organism>
    <name type="scientific">Cicer arietinum</name>
    <name type="common">Chickpea</name>
    <name type="synonym">Garbanzo</name>
    <dbReference type="NCBI Taxonomy" id="3827"/>
    <lineage>
        <taxon>Eukaryota</taxon>
        <taxon>Viridiplantae</taxon>
        <taxon>Streptophyta</taxon>
        <taxon>Embryophyta</taxon>
        <taxon>Tracheophyta</taxon>
        <taxon>Spermatophyta</taxon>
        <taxon>Magnoliopsida</taxon>
        <taxon>eudicotyledons</taxon>
        <taxon>Gunneridae</taxon>
        <taxon>Pentapetalae</taxon>
        <taxon>rosids</taxon>
        <taxon>fabids</taxon>
        <taxon>Fabales</taxon>
        <taxon>Fabaceae</taxon>
        <taxon>Papilionoideae</taxon>
        <taxon>50 kb inversion clade</taxon>
        <taxon>NPAAA clade</taxon>
        <taxon>Hologalegina</taxon>
        <taxon>IRL clade</taxon>
        <taxon>Cicereae</taxon>
        <taxon>Cicer</taxon>
    </lineage>
</organism>
<comment type="function">
    <text evidence="1">NDH shuttles electrons from NAD(P)H:plastoquinone, via FMN and iron-sulfur (Fe-S) centers, to quinones in the photosynthetic chain and possibly in a chloroplast respiratory chain. The immediate electron acceptor for the enzyme in this species is believed to be plastoquinone. Couples the redox reaction to proton translocation, and thus conserves the redox energy in a proton gradient.</text>
</comment>
<comment type="catalytic activity">
    <reaction evidence="1">
        <text>a plastoquinone + NADH + (n+1) H(+)(in) = a plastoquinol + NAD(+) + n H(+)(out)</text>
        <dbReference type="Rhea" id="RHEA:42608"/>
        <dbReference type="Rhea" id="RHEA-COMP:9561"/>
        <dbReference type="Rhea" id="RHEA-COMP:9562"/>
        <dbReference type="ChEBI" id="CHEBI:15378"/>
        <dbReference type="ChEBI" id="CHEBI:17757"/>
        <dbReference type="ChEBI" id="CHEBI:57540"/>
        <dbReference type="ChEBI" id="CHEBI:57945"/>
        <dbReference type="ChEBI" id="CHEBI:62192"/>
    </reaction>
</comment>
<comment type="catalytic activity">
    <reaction evidence="1">
        <text>a plastoquinone + NADPH + (n+1) H(+)(in) = a plastoquinol + NADP(+) + n H(+)(out)</text>
        <dbReference type="Rhea" id="RHEA:42612"/>
        <dbReference type="Rhea" id="RHEA-COMP:9561"/>
        <dbReference type="Rhea" id="RHEA-COMP:9562"/>
        <dbReference type="ChEBI" id="CHEBI:15378"/>
        <dbReference type="ChEBI" id="CHEBI:17757"/>
        <dbReference type="ChEBI" id="CHEBI:57783"/>
        <dbReference type="ChEBI" id="CHEBI:58349"/>
        <dbReference type="ChEBI" id="CHEBI:62192"/>
    </reaction>
</comment>
<comment type="subunit">
    <text evidence="1">NDH is composed of at least 16 different subunits, 5 of which are encoded in the nucleus.</text>
</comment>
<comment type="subcellular location">
    <subcellularLocation>
        <location evidence="1">Plastid</location>
        <location evidence="1">Chloroplast thylakoid membrane</location>
        <topology evidence="1">Multi-pass membrane protein</topology>
    </subcellularLocation>
</comment>
<comment type="similarity">
    <text evidence="1">Belongs to the complex I subunit 3 family.</text>
</comment>
<keyword id="KW-0150">Chloroplast</keyword>
<keyword id="KW-0472">Membrane</keyword>
<keyword id="KW-0520">NAD</keyword>
<keyword id="KW-0521">NADP</keyword>
<keyword id="KW-0934">Plastid</keyword>
<keyword id="KW-0618">Plastoquinone</keyword>
<keyword id="KW-0874">Quinone</keyword>
<keyword id="KW-1185">Reference proteome</keyword>
<keyword id="KW-0793">Thylakoid</keyword>
<keyword id="KW-1278">Translocase</keyword>
<keyword id="KW-0812">Transmembrane</keyword>
<keyword id="KW-1133">Transmembrane helix</keyword>
<keyword id="KW-0813">Transport</keyword>
<gene>
    <name evidence="1" type="primary">ndhC</name>
</gene>
<proteinExistence type="inferred from homology"/>
<dbReference type="EC" id="7.1.1.-" evidence="1"/>
<dbReference type="EMBL" id="EU835853">
    <property type="protein sequence ID" value="ACH41057.1"/>
    <property type="molecule type" value="Genomic_DNA"/>
</dbReference>
<dbReference type="RefSeq" id="YP_002149720.1">
    <property type="nucleotide sequence ID" value="NC_011163.1"/>
</dbReference>
<dbReference type="SMR" id="B5LML1"/>
<dbReference type="PaxDb" id="3827-XP_004488922.1"/>
<dbReference type="GeneID" id="6797476"/>
<dbReference type="KEGG" id="cam:6797476"/>
<dbReference type="eggNOG" id="KOG4662">
    <property type="taxonomic scope" value="Eukaryota"/>
</dbReference>
<dbReference type="OrthoDB" id="154075at2759"/>
<dbReference type="Proteomes" id="UP000087171">
    <property type="component" value="Chloroplast Pltd"/>
</dbReference>
<dbReference type="GO" id="GO:0009535">
    <property type="term" value="C:chloroplast thylakoid membrane"/>
    <property type="evidence" value="ECO:0007669"/>
    <property type="project" value="UniProtKB-SubCell"/>
</dbReference>
<dbReference type="GO" id="GO:0030964">
    <property type="term" value="C:NADH dehydrogenase complex"/>
    <property type="evidence" value="ECO:0007669"/>
    <property type="project" value="TreeGrafter"/>
</dbReference>
<dbReference type="GO" id="GO:0008137">
    <property type="term" value="F:NADH dehydrogenase (ubiquinone) activity"/>
    <property type="evidence" value="ECO:0007669"/>
    <property type="project" value="InterPro"/>
</dbReference>
<dbReference type="GO" id="GO:0048038">
    <property type="term" value="F:quinone binding"/>
    <property type="evidence" value="ECO:0007669"/>
    <property type="project" value="UniProtKB-KW"/>
</dbReference>
<dbReference type="GO" id="GO:0019684">
    <property type="term" value="P:photosynthesis, light reaction"/>
    <property type="evidence" value="ECO:0007669"/>
    <property type="project" value="UniProtKB-UniRule"/>
</dbReference>
<dbReference type="FunFam" id="1.20.58.1610:FF:000001">
    <property type="entry name" value="NAD(P)H-quinone oxidoreductase subunit 3, chloroplastic"/>
    <property type="match status" value="1"/>
</dbReference>
<dbReference type="Gene3D" id="1.20.58.1610">
    <property type="entry name" value="NADH:ubiquinone/plastoquinone oxidoreductase, chain 3"/>
    <property type="match status" value="1"/>
</dbReference>
<dbReference type="HAMAP" id="MF_01394">
    <property type="entry name" value="NDH1_NuoA"/>
    <property type="match status" value="1"/>
</dbReference>
<dbReference type="InterPro" id="IPR023043">
    <property type="entry name" value="NAD(P)H_OxRDtase_bac/plastid"/>
</dbReference>
<dbReference type="InterPro" id="IPR000440">
    <property type="entry name" value="NADH_UbQ/plastoQ_OxRdtase_su3"/>
</dbReference>
<dbReference type="InterPro" id="IPR038430">
    <property type="entry name" value="NDAH_ubi_oxred_su3_sf"/>
</dbReference>
<dbReference type="PANTHER" id="PTHR11058">
    <property type="entry name" value="NADH-UBIQUINONE OXIDOREDUCTASE CHAIN 3"/>
    <property type="match status" value="1"/>
</dbReference>
<dbReference type="PANTHER" id="PTHR11058:SF9">
    <property type="entry name" value="NADH-UBIQUINONE OXIDOREDUCTASE CHAIN 3"/>
    <property type="match status" value="1"/>
</dbReference>
<dbReference type="Pfam" id="PF00507">
    <property type="entry name" value="Oxidored_q4"/>
    <property type="match status" value="1"/>
</dbReference>
<feature type="chain" id="PRO_0000362821" description="NAD(P)H-quinone oxidoreductase subunit 3, chloroplastic">
    <location>
        <begin position="1"/>
        <end position="120"/>
    </location>
</feature>
<feature type="transmembrane region" description="Helical" evidence="1">
    <location>
        <begin position="14"/>
        <end position="34"/>
    </location>
</feature>
<feature type="transmembrane region" description="Helical" evidence="1">
    <location>
        <begin position="64"/>
        <end position="84"/>
    </location>
</feature>
<feature type="transmembrane region" description="Helical" evidence="1">
    <location>
        <begin position="88"/>
        <end position="108"/>
    </location>
</feature>